<dbReference type="EC" id="2.7.1.130" evidence="1"/>
<dbReference type="EMBL" id="CP000890">
    <property type="protein sequence ID" value="ABX77401.1"/>
    <property type="molecule type" value="Genomic_DNA"/>
</dbReference>
<dbReference type="RefSeq" id="WP_012220443.1">
    <property type="nucleotide sequence ID" value="NC_010117.1"/>
</dbReference>
<dbReference type="SMR" id="A9ND59"/>
<dbReference type="KEGG" id="cbs:COXBURSA331_A1092"/>
<dbReference type="HOGENOM" id="CLU_038816_2_0_6"/>
<dbReference type="UniPathway" id="UPA00359">
    <property type="reaction ID" value="UER00482"/>
</dbReference>
<dbReference type="GO" id="GO:0005886">
    <property type="term" value="C:plasma membrane"/>
    <property type="evidence" value="ECO:0007669"/>
    <property type="project" value="TreeGrafter"/>
</dbReference>
<dbReference type="GO" id="GO:0005524">
    <property type="term" value="F:ATP binding"/>
    <property type="evidence" value="ECO:0007669"/>
    <property type="project" value="UniProtKB-UniRule"/>
</dbReference>
<dbReference type="GO" id="GO:0009029">
    <property type="term" value="F:tetraacyldisaccharide 4'-kinase activity"/>
    <property type="evidence" value="ECO:0007669"/>
    <property type="project" value="UniProtKB-UniRule"/>
</dbReference>
<dbReference type="GO" id="GO:0009245">
    <property type="term" value="P:lipid A biosynthetic process"/>
    <property type="evidence" value="ECO:0007669"/>
    <property type="project" value="UniProtKB-UniRule"/>
</dbReference>
<dbReference type="GO" id="GO:0009244">
    <property type="term" value="P:lipopolysaccharide core region biosynthetic process"/>
    <property type="evidence" value="ECO:0007669"/>
    <property type="project" value="TreeGrafter"/>
</dbReference>
<dbReference type="CDD" id="cd01983">
    <property type="entry name" value="SIMIBI"/>
    <property type="match status" value="1"/>
</dbReference>
<dbReference type="HAMAP" id="MF_00409">
    <property type="entry name" value="LpxK"/>
    <property type="match status" value="1"/>
</dbReference>
<dbReference type="InterPro" id="IPR003758">
    <property type="entry name" value="LpxK"/>
</dbReference>
<dbReference type="InterPro" id="IPR027417">
    <property type="entry name" value="P-loop_NTPase"/>
</dbReference>
<dbReference type="NCBIfam" id="TIGR00682">
    <property type="entry name" value="lpxK"/>
    <property type="match status" value="1"/>
</dbReference>
<dbReference type="PANTHER" id="PTHR42724">
    <property type="entry name" value="TETRAACYLDISACCHARIDE 4'-KINASE"/>
    <property type="match status" value="1"/>
</dbReference>
<dbReference type="PANTHER" id="PTHR42724:SF1">
    <property type="entry name" value="TETRAACYLDISACCHARIDE 4'-KINASE, MITOCHONDRIAL-RELATED"/>
    <property type="match status" value="1"/>
</dbReference>
<dbReference type="Pfam" id="PF02606">
    <property type="entry name" value="LpxK"/>
    <property type="match status" value="1"/>
</dbReference>
<dbReference type="SUPFAM" id="SSF52540">
    <property type="entry name" value="P-loop containing nucleoside triphosphate hydrolases"/>
    <property type="match status" value="1"/>
</dbReference>
<protein>
    <recommendedName>
        <fullName evidence="1">Tetraacyldisaccharide 4'-kinase</fullName>
        <ecNumber evidence="1">2.7.1.130</ecNumber>
    </recommendedName>
    <alternativeName>
        <fullName evidence="1">Lipid A 4'-kinase</fullName>
    </alternativeName>
</protein>
<accession>A9ND59</accession>
<keyword id="KW-0067">ATP-binding</keyword>
<keyword id="KW-0418">Kinase</keyword>
<keyword id="KW-0441">Lipid A biosynthesis</keyword>
<keyword id="KW-0444">Lipid biosynthesis</keyword>
<keyword id="KW-0443">Lipid metabolism</keyword>
<keyword id="KW-0547">Nucleotide-binding</keyword>
<keyword id="KW-0808">Transferase</keyword>
<feature type="chain" id="PRO_1000080466" description="Tetraacyldisaccharide 4'-kinase">
    <location>
        <begin position="1"/>
        <end position="325"/>
    </location>
</feature>
<feature type="binding site" evidence="1">
    <location>
        <begin position="58"/>
        <end position="65"/>
    </location>
    <ligand>
        <name>ATP</name>
        <dbReference type="ChEBI" id="CHEBI:30616"/>
    </ligand>
</feature>
<sequence length="325" mass="36873">MLKAPRFWYQPRSLLGGILSPFSFLYQIIVRIRRGLYAVGLKKISKFPVPIVIVGNITVGGSGKTPFVIWLANELKNRGFRPGVVSRGYGGKANRFPQTVTENSDPLQVGDEAVLLMKKIDCPMVVCRDRGAAVKHLLRNFQCDVVIGDDGLQHYSLGRDLEIALIDDRHLGNGRCLPAGPLREPKSRLNTVDFVVPKQLRPNEIYQLKNPAKKIDFNELKELTVHAVAGIGNPGYFFKQLETLGANVIAHPFRDHYFYRSEDFNFDDDHLIILTEKDAIKCKQFDDERLFCFSVDAVVPDQFQNDFFRLISNIILRKQAQREGI</sequence>
<organism>
    <name type="scientific">Coxiella burnetii (strain RSA 331 / Henzerling II)</name>
    <dbReference type="NCBI Taxonomy" id="360115"/>
    <lineage>
        <taxon>Bacteria</taxon>
        <taxon>Pseudomonadati</taxon>
        <taxon>Pseudomonadota</taxon>
        <taxon>Gammaproteobacteria</taxon>
        <taxon>Legionellales</taxon>
        <taxon>Coxiellaceae</taxon>
        <taxon>Coxiella</taxon>
    </lineage>
</organism>
<name>LPXK_COXBR</name>
<reference key="1">
    <citation type="submission" date="2007-11" db="EMBL/GenBank/DDBJ databases">
        <title>Genome sequencing of phylogenetically and phenotypically diverse Coxiella burnetii isolates.</title>
        <authorList>
            <person name="Seshadri R."/>
            <person name="Samuel J.E."/>
        </authorList>
    </citation>
    <scope>NUCLEOTIDE SEQUENCE [LARGE SCALE GENOMIC DNA]</scope>
    <source>
        <strain>RSA 331 / Henzerling II</strain>
    </source>
</reference>
<comment type="function">
    <text evidence="1">Transfers the gamma-phosphate of ATP to the 4'-position of a tetraacyldisaccharide 1-phosphate intermediate (termed DS-1-P) to form tetraacyldisaccharide 1,4'-bis-phosphate (lipid IVA).</text>
</comment>
<comment type="catalytic activity">
    <reaction evidence="1">
        <text>a lipid A disaccharide + ATP = a lipid IVA + ADP + H(+)</text>
        <dbReference type="Rhea" id="RHEA:67840"/>
        <dbReference type="ChEBI" id="CHEBI:15378"/>
        <dbReference type="ChEBI" id="CHEBI:30616"/>
        <dbReference type="ChEBI" id="CHEBI:176343"/>
        <dbReference type="ChEBI" id="CHEBI:176425"/>
        <dbReference type="ChEBI" id="CHEBI:456216"/>
        <dbReference type="EC" id="2.7.1.130"/>
    </reaction>
</comment>
<comment type="pathway">
    <text evidence="1">Glycolipid biosynthesis; lipid IV(A) biosynthesis; lipid IV(A) from (3R)-3-hydroxytetradecanoyl-[acyl-carrier-protein] and UDP-N-acetyl-alpha-D-glucosamine: step 6/6.</text>
</comment>
<comment type="similarity">
    <text evidence="1">Belongs to the LpxK family.</text>
</comment>
<gene>
    <name evidence="1" type="primary">lpxK</name>
    <name type="ordered locus">COXBURSA331_A1092</name>
</gene>
<proteinExistence type="inferred from homology"/>
<evidence type="ECO:0000255" key="1">
    <source>
        <dbReference type="HAMAP-Rule" id="MF_00409"/>
    </source>
</evidence>